<sequence length="273" mass="30385">MAIIKCKPTSPGRRHAIKVVNPSLYKGKPISSLIRKNSKSGGRNNCGRITTRHIGGRHKRFYRIIDFKRNKDNIPAIVERLEYDPNRSSNIALILYSDGDRRYILASKGLMVGSKIVSGFNAEIKIGNALPMKNIPIGTVIHNVEIKPGKGGQIARSAGTYVQLISRENSYVTIRLRSGETRKLESKCRATIGEVGNSESMLRVLGKAGASRWRGIRPTVRGTAMNPVDHPHGGGEGRNFGKHPVSPWGLQTKGKKTRKNKRTEKFIIRHRHK</sequence>
<accession>Q89A71</accession>
<dbReference type="EMBL" id="AE016826">
    <property type="protein sequence ID" value="AAO27170.1"/>
    <property type="molecule type" value="Genomic_DNA"/>
</dbReference>
<dbReference type="RefSeq" id="WP_011091571.1">
    <property type="nucleotide sequence ID" value="NC_004545.1"/>
</dbReference>
<dbReference type="SMR" id="Q89A71"/>
<dbReference type="STRING" id="224915.bbp_464"/>
<dbReference type="KEGG" id="bab:bbp_464"/>
<dbReference type="eggNOG" id="COG0090">
    <property type="taxonomic scope" value="Bacteria"/>
</dbReference>
<dbReference type="HOGENOM" id="CLU_036235_2_1_6"/>
<dbReference type="OrthoDB" id="9778722at2"/>
<dbReference type="Proteomes" id="UP000000601">
    <property type="component" value="Chromosome"/>
</dbReference>
<dbReference type="GO" id="GO:0015934">
    <property type="term" value="C:large ribosomal subunit"/>
    <property type="evidence" value="ECO:0007669"/>
    <property type="project" value="InterPro"/>
</dbReference>
<dbReference type="GO" id="GO:0019843">
    <property type="term" value="F:rRNA binding"/>
    <property type="evidence" value="ECO:0007669"/>
    <property type="project" value="UniProtKB-UniRule"/>
</dbReference>
<dbReference type="GO" id="GO:0003735">
    <property type="term" value="F:structural constituent of ribosome"/>
    <property type="evidence" value="ECO:0007669"/>
    <property type="project" value="InterPro"/>
</dbReference>
<dbReference type="GO" id="GO:0016740">
    <property type="term" value="F:transferase activity"/>
    <property type="evidence" value="ECO:0007669"/>
    <property type="project" value="InterPro"/>
</dbReference>
<dbReference type="GO" id="GO:0002181">
    <property type="term" value="P:cytoplasmic translation"/>
    <property type="evidence" value="ECO:0007669"/>
    <property type="project" value="TreeGrafter"/>
</dbReference>
<dbReference type="FunFam" id="2.30.30.30:FF:000001">
    <property type="entry name" value="50S ribosomal protein L2"/>
    <property type="match status" value="1"/>
</dbReference>
<dbReference type="FunFam" id="2.40.50.140:FF:000003">
    <property type="entry name" value="50S ribosomal protein L2"/>
    <property type="match status" value="1"/>
</dbReference>
<dbReference type="FunFam" id="4.10.950.10:FF:000001">
    <property type="entry name" value="50S ribosomal protein L2"/>
    <property type="match status" value="1"/>
</dbReference>
<dbReference type="Gene3D" id="2.30.30.30">
    <property type="match status" value="1"/>
</dbReference>
<dbReference type="Gene3D" id="2.40.50.140">
    <property type="entry name" value="Nucleic acid-binding proteins"/>
    <property type="match status" value="1"/>
</dbReference>
<dbReference type="Gene3D" id="4.10.950.10">
    <property type="entry name" value="Ribosomal protein L2, domain 3"/>
    <property type="match status" value="1"/>
</dbReference>
<dbReference type="HAMAP" id="MF_01320_B">
    <property type="entry name" value="Ribosomal_uL2_B"/>
    <property type="match status" value="1"/>
</dbReference>
<dbReference type="InterPro" id="IPR012340">
    <property type="entry name" value="NA-bd_OB-fold"/>
</dbReference>
<dbReference type="InterPro" id="IPR014722">
    <property type="entry name" value="Rib_uL2_dom2"/>
</dbReference>
<dbReference type="InterPro" id="IPR002171">
    <property type="entry name" value="Ribosomal_uL2"/>
</dbReference>
<dbReference type="InterPro" id="IPR005880">
    <property type="entry name" value="Ribosomal_uL2_bac/org-type"/>
</dbReference>
<dbReference type="InterPro" id="IPR022669">
    <property type="entry name" value="Ribosomal_uL2_C"/>
</dbReference>
<dbReference type="InterPro" id="IPR022671">
    <property type="entry name" value="Ribosomal_uL2_CS"/>
</dbReference>
<dbReference type="InterPro" id="IPR014726">
    <property type="entry name" value="Ribosomal_uL2_dom3"/>
</dbReference>
<dbReference type="InterPro" id="IPR022666">
    <property type="entry name" value="Ribosomal_uL2_RNA-bd_dom"/>
</dbReference>
<dbReference type="InterPro" id="IPR008991">
    <property type="entry name" value="Translation_prot_SH3-like_sf"/>
</dbReference>
<dbReference type="NCBIfam" id="TIGR01171">
    <property type="entry name" value="rplB_bact"/>
    <property type="match status" value="1"/>
</dbReference>
<dbReference type="PANTHER" id="PTHR13691:SF5">
    <property type="entry name" value="LARGE RIBOSOMAL SUBUNIT PROTEIN UL2M"/>
    <property type="match status" value="1"/>
</dbReference>
<dbReference type="PANTHER" id="PTHR13691">
    <property type="entry name" value="RIBOSOMAL PROTEIN L2"/>
    <property type="match status" value="1"/>
</dbReference>
<dbReference type="Pfam" id="PF00181">
    <property type="entry name" value="Ribosomal_L2"/>
    <property type="match status" value="1"/>
</dbReference>
<dbReference type="Pfam" id="PF03947">
    <property type="entry name" value="Ribosomal_L2_C"/>
    <property type="match status" value="1"/>
</dbReference>
<dbReference type="PIRSF" id="PIRSF002158">
    <property type="entry name" value="Ribosomal_L2"/>
    <property type="match status" value="1"/>
</dbReference>
<dbReference type="SMART" id="SM01383">
    <property type="entry name" value="Ribosomal_L2"/>
    <property type="match status" value="1"/>
</dbReference>
<dbReference type="SMART" id="SM01382">
    <property type="entry name" value="Ribosomal_L2_C"/>
    <property type="match status" value="1"/>
</dbReference>
<dbReference type="SUPFAM" id="SSF50249">
    <property type="entry name" value="Nucleic acid-binding proteins"/>
    <property type="match status" value="1"/>
</dbReference>
<dbReference type="SUPFAM" id="SSF50104">
    <property type="entry name" value="Translation proteins SH3-like domain"/>
    <property type="match status" value="1"/>
</dbReference>
<dbReference type="PROSITE" id="PS00467">
    <property type="entry name" value="RIBOSOMAL_L2"/>
    <property type="match status" value="1"/>
</dbReference>
<proteinExistence type="inferred from homology"/>
<name>RL2_BUCBP</name>
<reference key="1">
    <citation type="journal article" date="2003" name="Proc. Natl. Acad. Sci. U.S.A.">
        <title>Reductive genome evolution in Buchnera aphidicola.</title>
        <authorList>
            <person name="van Ham R.C.H.J."/>
            <person name="Kamerbeek J."/>
            <person name="Palacios C."/>
            <person name="Rausell C."/>
            <person name="Abascal F."/>
            <person name="Bastolla U."/>
            <person name="Fernandez J.M."/>
            <person name="Jimenez L."/>
            <person name="Postigo M."/>
            <person name="Silva F.J."/>
            <person name="Tamames J."/>
            <person name="Viguera E."/>
            <person name="Latorre A."/>
            <person name="Valencia A."/>
            <person name="Moran F."/>
            <person name="Moya A."/>
        </authorList>
    </citation>
    <scope>NUCLEOTIDE SEQUENCE [LARGE SCALE GENOMIC DNA]</scope>
    <source>
        <strain>Bp</strain>
    </source>
</reference>
<keyword id="KW-1185">Reference proteome</keyword>
<keyword id="KW-0687">Ribonucleoprotein</keyword>
<keyword id="KW-0689">Ribosomal protein</keyword>
<keyword id="KW-0694">RNA-binding</keyword>
<keyword id="KW-0699">rRNA-binding</keyword>
<gene>
    <name evidence="1" type="primary">rplB</name>
    <name type="ordered locus">bbp_464</name>
</gene>
<evidence type="ECO:0000255" key="1">
    <source>
        <dbReference type="HAMAP-Rule" id="MF_01320"/>
    </source>
</evidence>
<evidence type="ECO:0000256" key="2">
    <source>
        <dbReference type="SAM" id="MobiDB-lite"/>
    </source>
</evidence>
<evidence type="ECO:0000305" key="3"/>
<feature type="chain" id="PRO_0000129541" description="Large ribosomal subunit protein uL2">
    <location>
        <begin position="1"/>
        <end position="273"/>
    </location>
</feature>
<feature type="region of interest" description="Disordered" evidence="2">
    <location>
        <begin position="221"/>
        <end position="263"/>
    </location>
</feature>
<feature type="compositionally biased region" description="Basic residues" evidence="2">
    <location>
        <begin position="253"/>
        <end position="263"/>
    </location>
</feature>
<protein>
    <recommendedName>
        <fullName evidence="1">Large ribosomal subunit protein uL2</fullName>
    </recommendedName>
    <alternativeName>
        <fullName evidence="3">50S ribosomal protein L2</fullName>
    </alternativeName>
</protein>
<organism>
    <name type="scientific">Buchnera aphidicola subsp. Baizongia pistaciae (strain Bp)</name>
    <dbReference type="NCBI Taxonomy" id="224915"/>
    <lineage>
        <taxon>Bacteria</taxon>
        <taxon>Pseudomonadati</taxon>
        <taxon>Pseudomonadota</taxon>
        <taxon>Gammaproteobacteria</taxon>
        <taxon>Enterobacterales</taxon>
        <taxon>Erwiniaceae</taxon>
        <taxon>Buchnera</taxon>
    </lineage>
</organism>
<comment type="function">
    <text evidence="1">One of the primary rRNA binding proteins. Required for association of the 30S and 50S subunits to form the 70S ribosome, for tRNA binding and peptide bond formation. It has been suggested to have peptidyltransferase activity; this is somewhat controversial. Makes several contacts with the 16S rRNA in the 70S ribosome.</text>
</comment>
<comment type="subunit">
    <text evidence="1">Part of the 50S ribosomal subunit. Forms a bridge to the 30S subunit in the 70S ribosome.</text>
</comment>
<comment type="similarity">
    <text evidence="1">Belongs to the universal ribosomal protein uL2 family.</text>
</comment>